<keyword id="KW-0004">4Fe-4S</keyword>
<keyword id="KW-0963">Cytoplasm</keyword>
<keyword id="KW-0408">Iron</keyword>
<keyword id="KW-0411">Iron-sulfur</keyword>
<keyword id="KW-0479">Metal-binding</keyword>
<keyword id="KW-1185">Reference proteome</keyword>
<keyword id="KW-0949">S-adenosyl-L-methionine</keyword>
<keyword id="KW-0808">Transferase</keyword>
<keyword id="KW-0819">tRNA processing</keyword>
<comment type="function">
    <text evidence="1">Catalyzes the methylthiolation of N6-(dimethylallyl)adenosine (i(6)A), leading to the formation of 2-methylthio-N6-(dimethylallyl)adenosine (ms(2)i(6)A) at position 37 in tRNAs that read codons beginning with uridine.</text>
</comment>
<comment type="catalytic activity">
    <reaction evidence="1">
        <text>N(6)-dimethylallyladenosine(37) in tRNA + (sulfur carrier)-SH + AH2 + 2 S-adenosyl-L-methionine = 2-methylsulfanyl-N(6)-dimethylallyladenosine(37) in tRNA + (sulfur carrier)-H + 5'-deoxyadenosine + L-methionine + A + S-adenosyl-L-homocysteine + 2 H(+)</text>
        <dbReference type="Rhea" id="RHEA:37067"/>
        <dbReference type="Rhea" id="RHEA-COMP:10375"/>
        <dbReference type="Rhea" id="RHEA-COMP:10376"/>
        <dbReference type="Rhea" id="RHEA-COMP:14737"/>
        <dbReference type="Rhea" id="RHEA-COMP:14739"/>
        <dbReference type="ChEBI" id="CHEBI:13193"/>
        <dbReference type="ChEBI" id="CHEBI:15378"/>
        <dbReference type="ChEBI" id="CHEBI:17319"/>
        <dbReference type="ChEBI" id="CHEBI:17499"/>
        <dbReference type="ChEBI" id="CHEBI:29917"/>
        <dbReference type="ChEBI" id="CHEBI:57844"/>
        <dbReference type="ChEBI" id="CHEBI:57856"/>
        <dbReference type="ChEBI" id="CHEBI:59789"/>
        <dbReference type="ChEBI" id="CHEBI:64428"/>
        <dbReference type="ChEBI" id="CHEBI:74415"/>
        <dbReference type="ChEBI" id="CHEBI:74417"/>
        <dbReference type="EC" id="2.8.4.3"/>
    </reaction>
</comment>
<comment type="cofactor">
    <cofactor evidence="1">
        <name>[4Fe-4S] cluster</name>
        <dbReference type="ChEBI" id="CHEBI:49883"/>
    </cofactor>
    <text evidence="1">Binds 2 [4Fe-4S] clusters. One cluster is coordinated with 3 cysteines and an exchangeable S-adenosyl-L-methionine.</text>
</comment>
<comment type="subunit">
    <text evidence="1">Monomer.</text>
</comment>
<comment type="subcellular location">
    <subcellularLocation>
        <location evidence="1">Cytoplasm</location>
    </subcellularLocation>
</comment>
<comment type="similarity">
    <text evidence="1">Belongs to the methylthiotransferase family. MiaB subfamily.</text>
</comment>
<comment type="sequence caution" evidence="3">
    <conflict type="erroneous initiation">
        <sequence resource="EMBL-CDS" id="AAM84772"/>
    </conflict>
</comment>
<comment type="sequence caution" evidence="3">
    <conflict type="erroneous initiation">
        <sequence resource="EMBL-CDS" id="AAS61339"/>
    </conflict>
</comment>
<reference key="1">
    <citation type="journal article" date="2001" name="Nature">
        <title>Genome sequence of Yersinia pestis, the causative agent of plague.</title>
        <authorList>
            <person name="Parkhill J."/>
            <person name="Wren B.W."/>
            <person name="Thomson N.R."/>
            <person name="Titball R.W."/>
            <person name="Holden M.T.G."/>
            <person name="Prentice M.B."/>
            <person name="Sebaihia M."/>
            <person name="James K.D."/>
            <person name="Churcher C.M."/>
            <person name="Mungall K.L."/>
            <person name="Baker S."/>
            <person name="Basham D."/>
            <person name="Bentley S.D."/>
            <person name="Brooks K."/>
            <person name="Cerdeno-Tarraga A.-M."/>
            <person name="Chillingworth T."/>
            <person name="Cronin A."/>
            <person name="Davies R.M."/>
            <person name="Davis P."/>
            <person name="Dougan G."/>
            <person name="Feltwell T."/>
            <person name="Hamlin N."/>
            <person name="Holroyd S."/>
            <person name="Jagels K."/>
            <person name="Karlyshev A.V."/>
            <person name="Leather S."/>
            <person name="Moule S."/>
            <person name="Oyston P.C.F."/>
            <person name="Quail M.A."/>
            <person name="Rutherford K.M."/>
            <person name="Simmonds M."/>
            <person name="Skelton J."/>
            <person name="Stevens K."/>
            <person name="Whitehead S."/>
            <person name="Barrell B.G."/>
        </authorList>
    </citation>
    <scope>NUCLEOTIDE SEQUENCE [LARGE SCALE GENOMIC DNA]</scope>
    <source>
        <strain>CO-92 / Biovar Orientalis</strain>
    </source>
</reference>
<reference key="2">
    <citation type="journal article" date="2002" name="J. Bacteriol.">
        <title>Genome sequence of Yersinia pestis KIM.</title>
        <authorList>
            <person name="Deng W."/>
            <person name="Burland V."/>
            <person name="Plunkett G. III"/>
            <person name="Boutin A."/>
            <person name="Mayhew G.F."/>
            <person name="Liss P."/>
            <person name="Perna N.T."/>
            <person name="Rose D.J."/>
            <person name="Mau B."/>
            <person name="Zhou S."/>
            <person name="Schwartz D.C."/>
            <person name="Fetherston J.D."/>
            <person name="Lindler L.E."/>
            <person name="Brubaker R.R."/>
            <person name="Plano G.V."/>
            <person name="Straley S.C."/>
            <person name="McDonough K.A."/>
            <person name="Nilles M.L."/>
            <person name="Matson J.S."/>
            <person name="Blattner F.R."/>
            <person name="Perry R.D."/>
        </authorList>
    </citation>
    <scope>NUCLEOTIDE SEQUENCE [LARGE SCALE GENOMIC DNA]</scope>
    <source>
        <strain>KIM10+ / Biovar Mediaevalis</strain>
    </source>
</reference>
<reference key="3">
    <citation type="journal article" date="2004" name="DNA Res.">
        <title>Complete genome sequence of Yersinia pestis strain 91001, an isolate avirulent to humans.</title>
        <authorList>
            <person name="Song Y."/>
            <person name="Tong Z."/>
            <person name="Wang J."/>
            <person name="Wang L."/>
            <person name="Guo Z."/>
            <person name="Han Y."/>
            <person name="Zhang J."/>
            <person name="Pei D."/>
            <person name="Zhou D."/>
            <person name="Qin H."/>
            <person name="Pang X."/>
            <person name="Han Y."/>
            <person name="Zhai J."/>
            <person name="Li M."/>
            <person name="Cui B."/>
            <person name="Qi Z."/>
            <person name="Jin L."/>
            <person name="Dai R."/>
            <person name="Chen F."/>
            <person name="Li S."/>
            <person name="Ye C."/>
            <person name="Du Z."/>
            <person name="Lin W."/>
            <person name="Wang J."/>
            <person name="Yu J."/>
            <person name="Yang H."/>
            <person name="Wang J."/>
            <person name="Huang P."/>
            <person name="Yang R."/>
        </authorList>
    </citation>
    <scope>NUCLEOTIDE SEQUENCE [LARGE SCALE GENOMIC DNA]</scope>
    <source>
        <strain>91001 / Biovar Mediaevalis</strain>
    </source>
</reference>
<dbReference type="EC" id="2.8.4.3" evidence="1"/>
<dbReference type="EMBL" id="AL590842">
    <property type="protein sequence ID" value="CAL21243.1"/>
    <property type="molecule type" value="Genomic_DNA"/>
</dbReference>
<dbReference type="EMBL" id="AE009952">
    <property type="protein sequence ID" value="AAM84772.1"/>
    <property type="status" value="ALT_INIT"/>
    <property type="molecule type" value="Genomic_DNA"/>
</dbReference>
<dbReference type="EMBL" id="AE017042">
    <property type="protein sequence ID" value="AAS61339.1"/>
    <property type="status" value="ALT_INIT"/>
    <property type="molecule type" value="Genomic_DNA"/>
</dbReference>
<dbReference type="PIR" id="AH0319">
    <property type="entry name" value="AH0319"/>
</dbReference>
<dbReference type="RefSeq" id="WP_002227875.1">
    <property type="nucleotide sequence ID" value="NZ_WUCM01000011.1"/>
</dbReference>
<dbReference type="RefSeq" id="YP_002347576.1">
    <property type="nucleotide sequence ID" value="NC_003143.1"/>
</dbReference>
<dbReference type="SMR" id="Q0WDR2"/>
<dbReference type="IntAct" id="Q0WDR2">
    <property type="interactions" value="2"/>
</dbReference>
<dbReference type="STRING" id="214092.YPO2620"/>
<dbReference type="PaxDb" id="214092-YPO2620"/>
<dbReference type="DNASU" id="1146142"/>
<dbReference type="EnsemblBacteria" id="AAS61339">
    <property type="protein sequence ID" value="AAS61339"/>
    <property type="gene ID" value="YP_1093"/>
</dbReference>
<dbReference type="GeneID" id="57976075"/>
<dbReference type="KEGG" id="ype:YPO2620"/>
<dbReference type="KEGG" id="ypj:CH55_1555"/>
<dbReference type="KEGG" id="ypk:y1195"/>
<dbReference type="KEGG" id="ypl:CH46_2495"/>
<dbReference type="KEGG" id="ypm:YP_1093"/>
<dbReference type="KEGG" id="ypv:BZ15_917"/>
<dbReference type="KEGG" id="ypw:CH59_3493"/>
<dbReference type="PATRIC" id="fig|214092.21.peg.3052"/>
<dbReference type="eggNOG" id="COG0621">
    <property type="taxonomic scope" value="Bacteria"/>
</dbReference>
<dbReference type="HOGENOM" id="CLU_018697_2_0_6"/>
<dbReference type="OrthoDB" id="9805215at2"/>
<dbReference type="Proteomes" id="UP000000815">
    <property type="component" value="Chromosome"/>
</dbReference>
<dbReference type="Proteomes" id="UP000001019">
    <property type="component" value="Chromosome"/>
</dbReference>
<dbReference type="Proteomes" id="UP000002490">
    <property type="component" value="Chromosome"/>
</dbReference>
<dbReference type="GO" id="GO:0005829">
    <property type="term" value="C:cytosol"/>
    <property type="evidence" value="ECO:0000318"/>
    <property type="project" value="GO_Central"/>
</dbReference>
<dbReference type="GO" id="GO:0051539">
    <property type="term" value="F:4 iron, 4 sulfur cluster binding"/>
    <property type="evidence" value="ECO:0000318"/>
    <property type="project" value="GO_Central"/>
</dbReference>
<dbReference type="GO" id="GO:0046872">
    <property type="term" value="F:metal ion binding"/>
    <property type="evidence" value="ECO:0007669"/>
    <property type="project" value="UniProtKB-KW"/>
</dbReference>
<dbReference type="GO" id="GO:0035597">
    <property type="term" value="F:N6-isopentenyladenosine methylthiotransferase activity"/>
    <property type="evidence" value="ECO:0000318"/>
    <property type="project" value="GO_Central"/>
</dbReference>
<dbReference type="GO" id="GO:0035600">
    <property type="term" value="P:tRNA methylthiolation"/>
    <property type="evidence" value="ECO:0000318"/>
    <property type="project" value="GO_Central"/>
</dbReference>
<dbReference type="CDD" id="cd01335">
    <property type="entry name" value="Radical_SAM"/>
    <property type="match status" value="1"/>
</dbReference>
<dbReference type="FunFam" id="3.40.50.12160:FF:000001">
    <property type="entry name" value="tRNA-2-methylthio-N(6)-dimethylallyladenosine synthase"/>
    <property type="match status" value="1"/>
</dbReference>
<dbReference type="FunFam" id="3.80.30.20:FF:000001">
    <property type="entry name" value="tRNA-2-methylthio-N(6)-dimethylallyladenosine synthase 2"/>
    <property type="match status" value="1"/>
</dbReference>
<dbReference type="Gene3D" id="3.40.50.12160">
    <property type="entry name" value="Methylthiotransferase, N-terminal domain"/>
    <property type="match status" value="1"/>
</dbReference>
<dbReference type="Gene3D" id="3.80.30.20">
    <property type="entry name" value="tm_1862 like domain"/>
    <property type="match status" value="1"/>
</dbReference>
<dbReference type="HAMAP" id="MF_01864">
    <property type="entry name" value="tRNA_metthiotr_MiaB"/>
    <property type="match status" value="1"/>
</dbReference>
<dbReference type="InterPro" id="IPR006638">
    <property type="entry name" value="Elp3/MiaA/NifB-like_rSAM"/>
</dbReference>
<dbReference type="InterPro" id="IPR005839">
    <property type="entry name" value="Methylthiotransferase"/>
</dbReference>
<dbReference type="InterPro" id="IPR020612">
    <property type="entry name" value="Methylthiotransferase_CS"/>
</dbReference>
<dbReference type="InterPro" id="IPR013848">
    <property type="entry name" value="Methylthiotransferase_N"/>
</dbReference>
<dbReference type="InterPro" id="IPR038135">
    <property type="entry name" value="Methylthiotransferase_N_sf"/>
</dbReference>
<dbReference type="InterPro" id="IPR006463">
    <property type="entry name" value="MiaB_methiolase"/>
</dbReference>
<dbReference type="InterPro" id="IPR007197">
    <property type="entry name" value="rSAM"/>
</dbReference>
<dbReference type="InterPro" id="IPR023404">
    <property type="entry name" value="rSAM_horseshoe"/>
</dbReference>
<dbReference type="InterPro" id="IPR002792">
    <property type="entry name" value="TRAM_dom"/>
</dbReference>
<dbReference type="NCBIfam" id="TIGR01574">
    <property type="entry name" value="miaB-methiolase"/>
    <property type="match status" value="1"/>
</dbReference>
<dbReference type="NCBIfam" id="TIGR00089">
    <property type="entry name" value="MiaB/RimO family radical SAM methylthiotransferase"/>
    <property type="match status" value="1"/>
</dbReference>
<dbReference type="PANTHER" id="PTHR43020">
    <property type="entry name" value="CDK5 REGULATORY SUBUNIT-ASSOCIATED PROTEIN 1"/>
    <property type="match status" value="1"/>
</dbReference>
<dbReference type="PANTHER" id="PTHR43020:SF2">
    <property type="entry name" value="MITOCHONDRIAL TRNA METHYLTHIOTRANSFERASE CDK5RAP1"/>
    <property type="match status" value="1"/>
</dbReference>
<dbReference type="Pfam" id="PF04055">
    <property type="entry name" value="Radical_SAM"/>
    <property type="match status" value="1"/>
</dbReference>
<dbReference type="Pfam" id="PF01938">
    <property type="entry name" value="TRAM"/>
    <property type="match status" value="1"/>
</dbReference>
<dbReference type="Pfam" id="PF00919">
    <property type="entry name" value="UPF0004"/>
    <property type="match status" value="1"/>
</dbReference>
<dbReference type="SFLD" id="SFLDF00273">
    <property type="entry name" value="(dimethylallyl)adenosine_tRNA"/>
    <property type="match status" value="1"/>
</dbReference>
<dbReference type="SFLD" id="SFLDG01082">
    <property type="entry name" value="B12-binding_domain_containing"/>
    <property type="match status" value="1"/>
</dbReference>
<dbReference type="SFLD" id="SFLDS00029">
    <property type="entry name" value="Radical_SAM"/>
    <property type="match status" value="1"/>
</dbReference>
<dbReference type="SMART" id="SM00729">
    <property type="entry name" value="Elp3"/>
    <property type="match status" value="1"/>
</dbReference>
<dbReference type="SUPFAM" id="SSF102114">
    <property type="entry name" value="Radical SAM enzymes"/>
    <property type="match status" value="1"/>
</dbReference>
<dbReference type="PROSITE" id="PS51449">
    <property type="entry name" value="MTTASE_N"/>
    <property type="match status" value="1"/>
</dbReference>
<dbReference type="PROSITE" id="PS01278">
    <property type="entry name" value="MTTASE_RADICAL"/>
    <property type="match status" value="1"/>
</dbReference>
<dbReference type="PROSITE" id="PS51918">
    <property type="entry name" value="RADICAL_SAM"/>
    <property type="match status" value="1"/>
</dbReference>
<dbReference type="PROSITE" id="PS50926">
    <property type="entry name" value="TRAM"/>
    <property type="match status" value="1"/>
</dbReference>
<proteinExistence type="inferred from homology"/>
<gene>
    <name evidence="1" type="primary">miaB</name>
    <name type="ordered locus">YPO2620</name>
    <name type="ordered locus">y1195</name>
    <name type="ordered locus">YP_1093</name>
</gene>
<feature type="chain" id="PRO_0000374655" description="tRNA-2-methylthio-N(6)-dimethylallyladenosine synthase">
    <location>
        <begin position="1"/>
        <end position="474"/>
    </location>
</feature>
<feature type="domain" description="MTTase N-terminal" evidence="1">
    <location>
        <begin position="3"/>
        <end position="120"/>
    </location>
</feature>
<feature type="domain" description="Radical SAM core" evidence="2">
    <location>
        <begin position="143"/>
        <end position="375"/>
    </location>
</feature>
<feature type="domain" description="TRAM" evidence="1">
    <location>
        <begin position="378"/>
        <end position="441"/>
    </location>
</feature>
<feature type="binding site" evidence="1">
    <location>
        <position position="12"/>
    </location>
    <ligand>
        <name>[4Fe-4S] cluster</name>
        <dbReference type="ChEBI" id="CHEBI:49883"/>
        <label>1</label>
    </ligand>
</feature>
<feature type="binding site" evidence="1">
    <location>
        <position position="49"/>
    </location>
    <ligand>
        <name>[4Fe-4S] cluster</name>
        <dbReference type="ChEBI" id="CHEBI:49883"/>
        <label>1</label>
    </ligand>
</feature>
<feature type="binding site" evidence="1">
    <location>
        <position position="83"/>
    </location>
    <ligand>
        <name>[4Fe-4S] cluster</name>
        <dbReference type="ChEBI" id="CHEBI:49883"/>
        <label>1</label>
    </ligand>
</feature>
<feature type="binding site" evidence="1">
    <location>
        <position position="157"/>
    </location>
    <ligand>
        <name>[4Fe-4S] cluster</name>
        <dbReference type="ChEBI" id="CHEBI:49883"/>
        <label>2</label>
        <note>4Fe-4S-S-AdoMet</note>
    </ligand>
</feature>
<feature type="binding site" evidence="1">
    <location>
        <position position="161"/>
    </location>
    <ligand>
        <name>[4Fe-4S] cluster</name>
        <dbReference type="ChEBI" id="CHEBI:49883"/>
        <label>2</label>
        <note>4Fe-4S-S-AdoMet</note>
    </ligand>
</feature>
<feature type="binding site" evidence="1">
    <location>
        <position position="164"/>
    </location>
    <ligand>
        <name>[4Fe-4S] cluster</name>
        <dbReference type="ChEBI" id="CHEBI:49883"/>
        <label>2</label>
        <note>4Fe-4S-S-AdoMet</note>
    </ligand>
</feature>
<feature type="sequence conflict" description="In Ref. 3; AAS61339." evidence="3" ref="3">
    <original>N</original>
    <variation>D</variation>
    <location>
        <position position="351"/>
    </location>
</feature>
<sequence length="474" mass="53405">MTKKLHIKTWGCQMNEYDSSKMADLLASTHGYQLTTIPEEADLLLLNTCSIREKAQEKVFSLLGQWKLLKEKNPQLIIGVGGCVASQEGEQLRQRAPCVDVIFGPQTLHRLPEMINHVQGTNSPVVDISFPEIEKFDRLPEPRAEGPTAFVSIMEGCNKYCTFCVVPYTRGEEVSRPSDDILFEIAQLAAQGVREVNLLGQNVNAYRGATYDGDICSFAELLRLVAAIDGIDRVRFTTSHPIEFTDDIIDVYRDTPELVSFLHLPVQSGSDRILTMMKRAHTALEYKAIIRKLRQARPDIQISSDFIVGFPGETQQDFEQTMKLVADIHFDTSYSFIYSPRPGTPAADLPNNVSEEEKKQRLHILQQRISQQAMEISRKMVGTVQRVLVEGTSRKNVMELAGRTENNRVVNFEGSPDMIGKFVDVEIVNVYASSLRGILLRTEDQMDLRTHESPQSVIARTRKENEIGVGIYQP</sequence>
<accession>Q0WDR2</accession>
<accession>Q74W15</accession>
<accession>Q8D123</accession>
<protein>
    <recommendedName>
        <fullName evidence="1">tRNA-2-methylthio-N(6)-dimethylallyladenosine synthase</fullName>
        <ecNumber evidence="1">2.8.4.3</ecNumber>
    </recommendedName>
    <alternativeName>
        <fullName evidence="1">(Dimethylallyl)adenosine tRNA methylthiotransferase MiaB</fullName>
    </alternativeName>
    <alternativeName>
        <fullName evidence="1">tRNA-i(6)A37 methylthiotransferase</fullName>
    </alternativeName>
</protein>
<name>MIAB_YERPE</name>
<organism>
    <name type="scientific">Yersinia pestis</name>
    <dbReference type="NCBI Taxonomy" id="632"/>
    <lineage>
        <taxon>Bacteria</taxon>
        <taxon>Pseudomonadati</taxon>
        <taxon>Pseudomonadota</taxon>
        <taxon>Gammaproteobacteria</taxon>
        <taxon>Enterobacterales</taxon>
        <taxon>Yersiniaceae</taxon>
        <taxon>Yersinia</taxon>
    </lineage>
</organism>
<evidence type="ECO:0000255" key="1">
    <source>
        <dbReference type="HAMAP-Rule" id="MF_01864"/>
    </source>
</evidence>
<evidence type="ECO:0000255" key="2">
    <source>
        <dbReference type="PROSITE-ProRule" id="PRU01266"/>
    </source>
</evidence>
<evidence type="ECO:0000305" key="3"/>